<reference key="1">
    <citation type="journal article" date="2001" name="J. Bacteriol.">
        <title>Genome sequence and comparative analysis of the solvent-producing bacterium Clostridium acetobutylicum.</title>
        <authorList>
            <person name="Noelling J."/>
            <person name="Breton G."/>
            <person name="Omelchenko M.V."/>
            <person name="Makarova K.S."/>
            <person name="Zeng Q."/>
            <person name="Gibson R."/>
            <person name="Lee H.M."/>
            <person name="Dubois J."/>
            <person name="Qiu D."/>
            <person name="Hitti J."/>
            <person name="Wolf Y.I."/>
            <person name="Tatusov R.L."/>
            <person name="Sabathe F."/>
            <person name="Doucette-Stamm L.A."/>
            <person name="Soucaille P."/>
            <person name="Daly M.J."/>
            <person name="Bennett G.N."/>
            <person name="Koonin E.V."/>
            <person name="Smith D.R."/>
        </authorList>
    </citation>
    <scope>NUCLEOTIDE SEQUENCE [LARGE SCALE GENOMIC DNA]</scope>
    <source>
        <strain>ATCC 824 / DSM 792 / JCM 1419 / IAM 19013 / LMG 5710 / NBRC 13948 / NRRL B-527 / VKM B-1787 / 2291 / W</strain>
    </source>
</reference>
<feature type="chain" id="PRO_0000189029" description="Probable septum site-determining protein MinC">
    <location>
        <begin position="1"/>
        <end position="211"/>
    </location>
</feature>
<keyword id="KW-0131">Cell cycle</keyword>
<keyword id="KW-0132">Cell division</keyword>
<keyword id="KW-1185">Reference proteome</keyword>
<keyword id="KW-0717">Septation</keyword>
<evidence type="ECO:0000255" key="1">
    <source>
        <dbReference type="HAMAP-Rule" id="MF_00267"/>
    </source>
</evidence>
<sequence>MFRDGITIKGNKEGLNVIININSFKDFDEMLDAFIAKLSKGKRFYKGCTLRITTQLKEINERNTRKLKDILFDEFLIKDCIFEDSDENKSKVFSGIYEGRTKFLRRTVRSGQIIKYSGNVVIVGDVNPGSEIYAGGNVIVFGILRGDVHAGSTGNDKAIIAALRLQPKILQIANRISRAPEDDDKPDYPEVARLKGDAIIVEPYSPNKFNI</sequence>
<gene>
    <name evidence="1" type="primary">minC</name>
    <name type="ordered locus">CA_C1248</name>
</gene>
<accession>Q97JM5</accession>
<name>MINC_CLOAB</name>
<organism>
    <name type="scientific">Clostridium acetobutylicum (strain ATCC 824 / DSM 792 / JCM 1419 / IAM 19013 / LMG 5710 / NBRC 13948 / NRRL B-527 / VKM B-1787 / 2291 / W)</name>
    <dbReference type="NCBI Taxonomy" id="272562"/>
    <lineage>
        <taxon>Bacteria</taxon>
        <taxon>Bacillati</taxon>
        <taxon>Bacillota</taxon>
        <taxon>Clostridia</taxon>
        <taxon>Eubacteriales</taxon>
        <taxon>Clostridiaceae</taxon>
        <taxon>Clostridium</taxon>
    </lineage>
</organism>
<dbReference type="EMBL" id="AE001437">
    <property type="protein sequence ID" value="AAK79220.1"/>
    <property type="molecule type" value="Genomic_DNA"/>
</dbReference>
<dbReference type="PIR" id="A97054">
    <property type="entry name" value="A97054"/>
</dbReference>
<dbReference type="RefSeq" id="NP_347880.1">
    <property type="nucleotide sequence ID" value="NC_003030.1"/>
</dbReference>
<dbReference type="RefSeq" id="WP_010964561.1">
    <property type="nucleotide sequence ID" value="NC_003030.1"/>
</dbReference>
<dbReference type="SMR" id="Q97JM5"/>
<dbReference type="STRING" id="272562.CA_C1248"/>
<dbReference type="GeneID" id="44997755"/>
<dbReference type="KEGG" id="cac:CA_C1248"/>
<dbReference type="PATRIC" id="fig|272562.8.peg.1448"/>
<dbReference type="eggNOG" id="COG0850">
    <property type="taxonomic scope" value="Bacteria"/>
</dbReference>
<dbReference type="HOGENOM" id="CLU_048711_2_0_9"/>
<dbReference type="OrthoDB" id="9790810at2"/>
<dbReference type="Proteomes" id="UP000000814">
    <property type="component" value="Chromosome"/>
</dbReference>
<dbReference type="GO" id="GO:0000902">
    <property type="term" value="P:cell morphogenesis"/>
    <property type="evidence" value="ECO:0007669"/>
    <property type="project" value="InterPro"/>
</dbReference>
<dbReference type="GO" id="GO:0000917">
    <property type="term" value="P:division septum assembly"/>
    <property type="evidence" value="ECO:0007669"/>
    <property type="project" value="UniProtKB-KW"/>
</dbReference>
<dbReference type="GO" id="GO:1901891">
    <property type="term" value="P:regulation of cell septum assembly"/>
    <property type="evidence" value="ECO:0007669"/>
    <property type="project" value="InterPro"/>
</dbReference>
<dbReference type="Gene3D" id="2.160.20.70">
    <property type="match status" value="1"/>
</dbReference>
<dbReference type="Gene3D" id="3.30.160.540">
    <property type="match status" value="1"/>
</dbReference>
<dbReference type="HAMAP" id="MF_00267">
    <property type="entry name" value="MinC"/>
    <property type="match status" value="1"/>
</dbReference>
<dbReference type="InterPro" id="IPR016098">
    <property type="entry name" value="CAP/MinC_C"/>
</dbReference>
<dbReference type="InterPro" id="IPR013033">
    <property type="entry name" value="MinC"/>
</dbReference>
<dbReference type="InterPro" id="IPR036145">
    <property type="entry name" value="MinC_C_sf"/>
</dbReference>
<dbReference type="InterPro" id="IPR055219">
    <property type="entry name" value="MinC_N_1"/>
</dbReference>
<dbReference type="InterPro" id="IPR005526">
    <property type="entry name" value="Septum_form_inhib_MinC_C"/>
</dbReference>
<dbReference type="NCBIfam" id="TIGR01222">
    <property type="entry name" value="minC"/>
    <property type="match status" value="1"/>
</dbReference>
<dbReference type="NCBIfam" id="NF001775">
    <property type="entry name" value="PRK00513.1-6"/>
    <property type="match status" value="1"/>
</dbReference>
<dbReference type="PANTHER" id="PTHR34108">
    <property type="entry name" value="SEPTUM SITE-DETERMINING PROTEIN MINC"/>
    <property type="match status" value="1"/>
</dbReference>
<dbReference type="PANTHER" id="PTHR34108:SF1">
    <property type="entry name" value="SEPTUM SITE-DETERMINING PROTEIN MINC"/>
    <property type="match status" value="1"/>
</dbReference>
<dbReference type="Pfam" id="PF03775">
    <property type="entry name" value="MinC_C"/>
    <property type="match status" value="1"/>
</dbReference>
<dbReference type="Pfam" id="PF22642">
    <property type="entry name" value="MinC_N_1"/>
    <property type="match status" value="1"/>
</dbReference>
<dbReference type="SUPFAM" id="SSF63848">
    <property type="entry name" value="Cell-division inhibitor MinC, C-terminal domain"/>
    <property type="match status" value="1"/>
</dbReference>
<proteinExistence type="inferred from homology"/>
<comment type="function">
    <text evidence="1">Cell division inhibitor that blocks the formation of polar Z ring septums. Rapidly oscillates between the poles of the cell to destabilize FtsZ filaments that have formed before they mature into polar Z rings. Prevents FtsZ polymerization.</text>
</comment>
<comment type="subunit">
    <text evidence="1">Interacts with MinD and FtsZ.</text>
</comment>
<comment type="similarity">
    <text evidence="1">Belongs to the MinC family.</text>
</comment>
<protein>
    <recommendedName>
        <fullName evidence="1">Probable septum site-determining protein MinC</fullName>
    </recommendedName>
</protein>